<name>SYA_STAA3</name>
<keyword id="KW-0030">Aminoacyl-tRNA synthetase</keyword>
<keyword id="KW-0067">ATP-binding</keyword>
<keyword id="KW-0963">Cytoplasm</keyword>
<keyword id="KW-0436">Ligase</keyword>
<keyword id="KW-0479">Metal-binding</keyword>
<keyword id="KW-0547">Nucleotide-binding</keyword>
<keyword id="KW-0648">Protein biosynthesis</keyword>
<keyword id="KW-0694">RNA-binding</keyword>
<keyword id="KW-0820">tRNA-binding</keyword>
<keyword id="KW-0862">Zinc</keyword>
<comment type="function">
    <text evidence="1">Catalyzes the attachment of alanine to tRNA(Ala) in a two-step reaction: alanine is first activated by ATP to form Ala-AMP and then transferred to the acceptor end of tRNA(Ala). Also edits incorrectly charged Ser-tRNA(Ala) and Gly-tRNA(Ala) via its editing domain.</text>
</comment>
<comment type="catalytic activity">
    <reaction evidence="1">
        <text>tRNA(Ala) + L-alanine + ATP = L-alanyl-tRNA(Ala) + AMP + diphosphate</text>
        <dbReference type="Rhea" id="RHEA:12540"/>
        <dbReference type="Rhea" id="RHEA-COMP:9657"/>
        <dbReference type="Rhea" id="RHEA-COMP:9923"/>
        <dbReference type="ChEBI" id="CHEBI:30616"/>
        <dbReference type="ChEBI" id="CHEBI:33019"/>
        <dbReference type="ChEBI" id="CHEBI:57972"/>
        <dbReference type="ChEBI" id="CHEBI:78442"/>
        <dbReference type="ChEBI" id="CHEBI:78497"/>
        <dbReference type="ChEBI" id="CHEBI:456215"/>
        <dbReference type="EC" id="6.1.1.7"/>
    </reaction>
</comment>
<comment type="cofactor">
    <cofactor evidence="1">
        <name>Zn(2+)</name>
        <dbReference type="ChEBI" id="CHEBI:29105"/>
    </cofactor>
    <text evidence="1">Binds 1 zinc ion per subunit.</text>
</comment>
<comment type="subcellular location">
    <subcellularLocation>
        <location evidence="1">Cytoplasm</location>
    </subcellularLocation>
</comment>
<comment type="domain">
    <text evidence="1">Consists of three domains; the N-terminal catalytic domain, the editing domain and the C-terminal C-Ala domain. The editing domain removes incorrectly charged amino acids, while the C-Ala domain, along with tRNA(Ala), serves as a bridge to cooperatively bring together the editing and aminoacylation centers thus stimulating deacylation of misacylated tRNAs.</text>
</comment>
<comment type="similarity">
    <text evidence="1">Belongs to the class-II aminoacyl-tRNA synthetase family.</text>
</comment>
<evidence type="ECO:0000255" key="1">
    <source>
        <dbReference type="HAMAP-Rule" id="MF_00036"/>
    </source>
</evidence>
<reference key="1">
    <citation type="journal article" date="2006" name="Lancet">
        <title>Complete genome sequence of USA300, an epidemic clone of community-acquired meticillin-resistant Staphylococcus aureus.</title>
        <authorList>
            <person name="Diep B.A."/>
            <person name="Gill S.R."/>
            <person name="Chang R.F."/>
            <person name="Phan T.H."/>
            <person name="Chen J.H."/>
            <person name="Davidson M.G."/>
            <person name="Lin F."/>
            <person name="Lin J."/>
            <person name="Carleton H.A."/>
            <person name="Mongodin E.F."/>
            <person name="Sensabaugh G.F."/>
            <person name="Perdreau-Remington F."/>
        </authorList>
    </citation>
    <scope>NUCLEOTIDE SEQUENCE [LARGE SCALE GENOMIC DNA]</scope>
    <source>
        <strain>USA300</strain>
    </source>
</reference>
<dbReference type="EC" id="6.1.1.7" evidence="1"/>
<dbReference type="EMBL" id="CP000255">
    <property type="protein sequence ID" value="ABD21637.1"/>
    <property type="molecule type" value="Genomic_DNA"/>
</dbReference>
<dbReference type="RefSeq" id="WP_000734064.1">
    <property type="nucleotide sequence ID" value="NZ_CP027476.1"/>
</dbReference>
<dbReference type="SMR" id="Q2FGA8"/>
<dbReference type="KEGG" id="saa:SAUSA300_1575"/>
<dbReference type="HOGENOM" id="CLU_004485_1_1_9"/>
<dbReference type="OMA" id="NKKDNFW"/>
<dbReference type="Proteomes" id="UP000001939">
    <property type="component" value="Chromosome"/>
</dbReference>
<dbReference type="GO" id="GO:0005829">
    <property type="term" value="C:cytosol"/>
    <property type="evidence" value="ECO:0007669"/>
    <property type="project" value="TreeGrafter"/>
</dbReference>
<dbReference type="GO" id="GO:0004813">
    <property type="term" value="F:alanine-tRNA ligase activity"/>
    <property type="evidence" value="ECO:0007669"/>
    <property type="project" value="UniProtKB-UniRule"/>
</dbReference>
<dbReference type="GO" id="GO:0002161">
    <property type="term" value="F:aminoacyl-tRNA deacylase activity"/>
    <property type="evidence" value="ECO:0007669"/>
    <property type="project" value="TreeGrafter"/>
</dbReference>
<dbReference type="GO" id="GO:0005524">
    <property type="term" value="F:ATP binding"/>
    <property type="evidence" value="ECO:0007669"/>
    <property type="project" value="UniProtKB-UniRule"/>
</dbReference>
<dbReference type="GO" id="GO:0140096">
    <property type="term" value="F:catalytic activity, acting on a protein"/>
    <property type="evidence" value="ECO:0007669"/>
    <property type="project" value="UniProtKB-ARBA"/>
</dbReference>
<dbReference type="GO" id="GO:0016740">
    <property type="term" value="F:transferase activity"/>
    <property type="evidence" value="ECO:0007669"/>
    <property type="project" value="UniProtKB-ARBA"/>
</dbReference>
<dbReference type="GO" id="GO:0000049">
    <property type="term" value="F:tRNA binding"/>
    <property type="evidence" value="ECO:0007669"/>
    <property type="project" value="UniProtKB-KW"/>
</dbReference>
<dbReference type="GO" id="GO:0008270">
    <property type="term" value="F:zinc ion binding"/>
    <property type="evidence" value="ECO:0007669"/>
    <property type="project" value="UniProtKB-UniRule"/>
</dbReference>
<dbReference type="GO" id="GO:0006419">
    <property type="term" value="P:alanyl-tRNA aminoacylation"/>
    <property type="evidence" value="ECO:0007669"/>
    <property type="project" value="UniProtKB-UniRule"/>
</dbReference>
<dbReference type="CDD" id="cd00673">
    <property type="entry name" value="AlaRS_core"/>
    <property type="match status" value="1"/>
</dbReference>
<dbReference type="FunFam" id="2.40.30.130:FF:000001">
    <property type="entry name" value="Alanine--tRNA ligase"/>
    <property type="match status" value="1"/>
</dbReference>
<dbReference type="FunFam" id="3.10.310.40:FF:000001">
    <property type="entry name" value="Alanine--tRNA ligase"/>
    <property type="match status" value="1"/>
</dbReference>
<dbReference type="FunFam" id="3.30.54.20:FF:000001">
    <property type="entry name" value="Alanine--tRNA ligase"/>
    <property type="match status" value="1"/>
</dbReference>
<dbReference type="FunFam" id="3.30.930.10:FF:000046">
    <property type="entry name" value="Alanine--tRNA ligase"/>
    <property type="match status" value="1"/>
</dbReference>
<dbReference type="FunFam" id="3.30.980.10:FF:000004">
    <property type="entry name" value="Alanine--tRNA ligase, cytoplasmic"/>
    <property type="match status" value="1"/>
</dbReference>
<dbReference type="Gene3D" id="2.40.30.130">
    <property type="match status" value="1"/>
</dbReference>
<dbReference type="Gene3D" id="3.10.310.40">
    <property type="match status" value="1"/>
</dbReference>
<dbReference type="Gene3D" id="3.30.54.20">
    <property type="match status" value="1"/>
</dbReference>
<dbReference type="Gene3D" id="3.30.930.10">
    <property type="entry name" value="Bira Bifunctional Protein, Domain 2"/>
    <property type="match status" value="1"/>
</dbReference>
<dbReference type="Gene3D" id="3.30.980.10">
    <property type="entry name" value="Threonyl-trna Synthetase, Chain A, domain 2"/>
    <property type="match status" value="1"/>
</dbReference>
<dbReference type="HAMAP" id="MF_00036_B">
    <property type="entry name" value="Ala_tRNA_synth_B"/>
    <property type="match status" value="1"/>
</dbReference>
<dbReference type="InterPro" id="IPR045864">
    <property type="entry name" value="aa-tRNA-synth_II/BPL/LPL"/>
</dbReference>
<dbReference type="InterPro" id="IPR002318">
    <property type="entry name" value="Ala-tRNA-lgiase_IIc"/>
</dbReference>
<dbReference type="InterPro" id="IPR018162">
    <property type="entry name" value="Ala-tRNA-ligase_IIc_anticod-bd"/>
</dbReference>
<dbReference type="InterPro" id="IPR018165">
    <property type="entry name" value="Ala-tRNA-synth_IIc_core"/>
</dbReference>
<dbReference type="InterPro" id="IPR018164">
    <property type="entry name" value="Ala-tRNA-synth_IIc_N"/>
</dbReference>
<dbReference type="InterPro" id="IPR050058">
    <property type="entry name" value="Ala-tRNA_ligase"/>
</dbReference>
<dbReference type="InterPro" id="IPR023033">
    <property type="entry name" value="Ala_tRNA_ligase_euk/bac"/>
</dbReference>
<dbReference type="InterPro" id="IPR003156">
    <property type="entry name" value="DHHA1_dom"/>
</dbReference>
<dbReference type="InterPro" id="IPR018163">
    <property type="entry name" value="Thr/Ala-tRNA-synth_IIc_edit"/>
</dbReference>
<dbReference type="InterPro" id="IPR009000">
    <property type="entry name" value="Transl_B-barrel_sf"/>
</dbReference>
<dbReference type="InterPro" id="IPR012947">
    <property type="entry name" value="tRNA_SAD"/>
</dbReference>
<dbReference type="NCBIfam" id="TIGR00344">
    <property type="entry name" value="alaS"/>
    <property type="match status" value="1"/>
</dbReference>
<dbReference type="PANTHER" id="PTHR11777:SF9">
    <property type="entry name" value="ALANINE--TRNA LIGASE, CYTOPLASMIC"/>
    <property type="match status" value="1"/>
</dbReference>
<dbReference type="PANTHER" id="PTHR11777">
    <property type="entry name" value="ALANYL-TRNA SYNTHETASE"/>
    <property type="match status" value="1"/>
</dbReference>
<dbReference type="Pfam" id="PF02272">
    <property type="entry name" value="DHHA1"/>
    <property type="match status" value="1"/>
</dbReference>
<dbReference type="Pfam" id="PF01411">
    <property type="entry name" value="tRNA-synt_2c"/>
    <property type="match status" value="1"/>
</dbReference>
<dbReference type="Pfam" id="PF07973">
    <property type="entry name" value="tRNA_SAD"/>
    <property type="match status" value="1"/>
</dbReference>
<dbReference type="PRINTS" id="PR00980">
    <property type="entry name" value="TRNASYNTHALA"/>
</dbReference>
<dbReference type="SMART" id="SM00863">
    <property type="entry name" value="tRNA_SAD"/>
    <property type="match status" value="1"/>
</dbReference>
<dbReference type="SUPFAM" id="SSF55681">
    <property type="entry name" value="Class II aaRS and biotin synthetases"/>
    <property type="match status" value="1"/>
</dbReference>
<dbReference type="SUPFAM" id="SSF101353">
    <property type="entry name" value="Putative anticodon-binding domain of alanyl-tRNA synthetase (AlaRS)"/>
    <property type="match status" value="1"/>
</dbReference>
<dbReference type="SUPFAM" id="SSF55186">
    <property type="entry name" value="ThrRS/AlaRS common domain"/>
    <property type="match status" value="1"/>
</dbReference>
<dbReference type="SUPFAM" id="SSF50447">
    <property type="entry name" value="Translation proteins"/>
    <property type="match status" value="1"/>
</dbReference>
<dbReference type="PROSITE" id="PS50860">
    <property type="entry name" value="AA_TRNA_LIGASE_II_ALA"/>
    <property type="match status" value="1"/>
</dbReference>
<proteinExistence type="inferred from homology"/>
<gene>
    <name evidence="1" type="primary">alaS</name>
    <name type="ordered locus">SAUSA300_1575</name>
</gene>
<protein>
    <recommendedName>
        <fullName evidence="1">Alanine--tRNA ligase</fullName>
        <ecNumber evidence="1">6.1.1.7</ecNumber>
    </recommendedName>
    <alternativeName>
        <fullName evidence="1">Alanyl-tRNA synthetase</fullName>
        <shortName evidence="1">AlaRS</shortName>
    </alternativeName>
</protein>
<sequence length="876" mass="98520">MKKLKASEIRQKYLDFFVEKGHMVEPSAPLVPIDDDTLLWINSGVATLKKYFDGRETPKKPRIVNSQKAIRTNDIENVGFTARHHTFFEMLGNFSIGDYFKQEAIEFAWEFLTSDKWMGMEPDKLYVTIHPEDMEAYNIWHKDIGLEESRIIRIEGNFWDIGEGPSGPNTEIFYDRGEAYGQDDPAEEMYPGGENERYLEVWNLVFSEFNHNKDHSYTPLPNKNIDTGMGLERMASVSQNVRTNYETDLFMPIMNEIEKVSGKQYLVNNEQDVAFKVIADHIRTIAFAISDGALPANEGRGYVLRRLLRRAVRFSQTLGINEPFMYKLVDIVADIMEPYYPNVKEKADFIKRVIKSEEERFHETLEDGLAILNELIKKAKATTNEINGKDAFKLYDTYGFPIELTEEIAVQAGLKVDMTTFESEMQQQRDRARQARQNSQSMQVQSEVLKNITSASTFVGYDTATAQTTLTHLIYNGEEVSQVEAGETVYFMLTETPFYAISGGQVADTGIVYNDNFEIAVSEVTKAPNGQNLHKGVVQFGQVNVGATVSAEVNQNDRRDIQKNHSATHLLHAALKSVLGDHVNQAGSLVEADRLRFDFSHFGPMTNDEIDQVERLVNEEIWKGIDVNIQEMDIASAKEMGAMALFGEKYGDVVRVVNMAPFSIELCGGIHVRNTSEIGLFKIVSESGTGAGVRRIEALTGKAAFLYLEDIQEKFNTMKSQLKVKSDDQVVDKLTQLQDEEKALLKQLEQRDKEITSLKMGNIEDQVEEINGYKVLVTEVDVPNAKAIRSTMDDFKSKLQDTIIILASNVDDKVSMVATVPKSLTNNVKAGDLIKQMAPIVGGKGGGRPDMAQGGGTQPENISKSLSFIKDYIKNL</sequence>
<feature type="chain" id="PRO_0000347815" description="Alanine--tRNA ligase">
    <location>
        <begin position="1"/>
        <end position="876"/>
    </location>
</feature>
<feature type="binding site" evidence="1">
    <location>
        <position position="565"/>
    </location>
    <ligand>
        <name>Zn(2+)</name>
        <dbReference type="ChEBI" id="CHEBI:29105"/>
    </ligand>
</feature>
<feature type="binding site" evidence="1">
    <location>
        <position position="569"/>
    </location>
    <ligand>
        <name>Zn(2+)</name>
        <dbReference type="ChEBI" id="CHEBI:29105"/>
    </ligand>
</feature>
<feature type="binding site" evidence="1">
    <location>
        <position position="667"/>
    </location>
    <ligand>
        <name>Zn(2+)</name>
        <dbReference type="ChEBI" id="CHEBI:29105"/>
    </ligand>
</feature>
<feature type="binding site" evidence="1">
    <location>
        <position position="671"/>
    </location>
    <ligand>
        <name>Zn(2+)</name>
        <dbReference type="ChEBI" id="CHEBI:29105"/>
    </ligand>
</feature>
<accession>Q2FGA8</accession>
<organism>
    <name type="scientific">Staphylococcus aureus (strain USA300)</name>
    <dbReference type="NCBI Taxonomy" id="367830"/>
    <lineage>
        <taxon>Bacteria</taxon>
        <taxon>Bacillati</taxon>
        <taxon>Bacillota</taxon>
        <taxon>Bacilli</taxon>
        <taxon>Bacillales</taxon>
        <taxon>Staphylococcaceae</taxon>
        <taxon>Staphylococcus</taxon>
    </lineage>
</organism>